<protein>
    <recommendedName>
        <fullName evidence="1">Small ribosomal subunit protein uS4</fullName>
    </recommendedName>
    <alternativeName>
        <fullName evidence="2">30S ribosomal protein S4</fullName>
    </alternativeName>
</protein>
<accession>A6QHQ3</accession>
<keyword id="KW-0687">Ribonucleoprotein</keyword>
<keyword id="KW-0689">Ribosomal protein</keyword>
<keyword id="KW-0694">RNA-binding</keyword>
<keyword id="KW-0699">rRNA-binding</keyword>
<reference key="1">
    <citation type="journal article" date="2008" name="J. Bacteriol.">
        <title>Genome sequence of Staphylococcus aureus strain Newman and comparative analysis of staphylococcal genomes: polymorphism and evolution of two major pathogenicity islands.</title>
        <authorList>
            <person name="Baba T."/>
            <person name="Bae T."/>
            <person name="Schneewind O."/>
            <person name="Takeuchi F."/>
            <person name="Hiramatsu K."/>
        </authorList>
    </citation>
    <scope>NUCLEOTIDE SEQUENCE [LARGE SCALE GENOMIC DNA]</scope>
    <source>
        <strain>Newman</strain>
    </source>
</reference>
<name>RS4_STAAE</name>
<dbReference type="EMBL" id="AP009351">
    <property type="protein sequence ID" value="BAF67885.1"/>
    <property type="molecule type" value="Genomic_DNA"/>
</dbReference>
<dbReference type="RefSeq" id="WP_000090512.1">
    <property type="nucleotide sequence ID" value="NZ_JBBIAE010000009.1"/>
</dbReference>
<dbReference type="SMR" id="A6QHQ3"/>
<dbReference type="KEGG" id="sae:NWMN_1613"/>
<dbReference type="HOGENOM" id="CLU_092403_0_1_9"/>
<dbReference type="Proteomes" id="UP000006386">
    <property type="component" value="Chromosome"/>
</dbReference>
<dbReference type="GO" id="GO:0015935">
    <property type="term" value="C:small ribosomal subunit"/>
    <property type="evidence" value="ECO:0007669"/>
    <property type="project" value="InterPro"/>
</dbReference>
<dbReference type="GO" id="GO:0019843">
    <property type="term" value="F:rRNA binding"/>
    <property type="evidence" value="ECO:0007669"/>
    <property type="project" value="UniProtKB-UniRule"/>
</dbReference>
<dbReference type="GO" id="GO:0003735">
    <property type="term" value="F:structural constituent of ribosome"/>
    <property type="evidence" value="ECO:0007669"/>
    <property type="project" value="InterPro"/>
</dbReference>
<dbReference type="GO" id="GO:0042274">
    <property type="term" value="P:ribosomal small subunit biogenesis"/>
    <property type="evidence" value="ECO:0007669"/>
    <property type="project" value="TreeGrafter"/>
</dbReference>
<dbReference type="GO" id="GO:0006412">
    <property type="term" value="P:translation"/>
    <property type="evidence" value="ECO:0007669"/>
    <property type="project" value="UniProtKB-UniRule"/>
</dbReference>
<dbReference type="CDD" id="cd00165">
    <property type="entry name" value="S4"/>
    <property type="match status" value="1"/>
</dbReference>
<dbReference type="FunFam" id="1.10.1050.10:FF:000001">
    <property type="entry name" value="30S ribosomal protein S4"/>
    <property type="match status" value="1"/>
</dbReference>
<dbReference type="FunFam" id="3.10.290.10:FF:000001">
    <property type="entry name" value="30S ribosomal protein S4"/>
    <property type="match status" value="1"/>
</dbReference>
<dbReference type="Gene3D" id="1.10.1050.10">
    <property type="entry name" value="Ribosomal Protein S4 Delta 41, Chain A, domain 1"/>
    <property type="match status" value="1"/>
</dbReference>
<dbReference type="Gene3D" id="3.10.290.10">
    <property type="entry name" value="RNA-binding S4 domain"/>
    <property type="match status" value="1"/>
</dbReference>
<dbReference type="HAMAP" id="MF_01306_B">
    <property type="entry name" value="Ribosomal_uS4_B"/>
    <property type="match status" value="1"/>
</dbReference>
<dbReference type="InterPro" id="IPR022801">
    <property type="entry name" value="Ribosomal_uS4"/>
</dbReference>
<dbReference type="InterPro" id="IPR005709">
    <property type="entry name" value="Ribosomal_uS4_bac-type"/>
</dbReference>
<dbReference type="InterPro" id="IPR018079">
    <property type="entry name" value="Ribosomal_uS4_CS"/>
</dbReference>
<dbReference type="InterPro" id="IPR001912">
    <property type="entry name" value="Ribosomal_uS4_N"/>
</dbReference>
<dbReference type="InterPro" id="IPR002942">
    <property type="entry name" value="S4_RNA-bd"/>
</dbReference>
<dbReference type="InterPro" id="IPR036986">
    <property type="entry name" value="S4_RNA-bd_sf"/>
</dbReference>
<dbReference type="NCBIfam" id="NF003717">
    <property type="entry name" value="PRK05327.1"/>
    <property type="match status" value="1"/>
</dbReference>
<dbReference type="NCBIfam" id="TIGR01017">
    <property type="entry name" value="rpsD_bact"/>
    <property type="match status" value="1"/>
</dbReference>
<dbReference type="PANTHER" id="PTHR11831">
    <property type="entry name" value="30S 40S RIBOSOMAL PROTEIN"/>
    <property type="match status" value="1"/>
</dbReference>
<dbReference type="PANTHER" id="PTHR11831:SF4">
    <property type="entry name" value="SMALL RIBOSOMAL SUBUNIT PROTEIN US4M"/>
    <property type="match status" value="1"/>
</dbReference>
<dbReference type="Pfam" id="PF00163">
    <property type="entry name" value="Ribosomal_S4"/>
    <property type="match status" value="1"/>
</dbReference>
<dbReference type="Pfam" id="PF01479">
    <property type="entry name" value="S4"/>
    <property type="match status" value="1"/>
</dbReference>
<dbReference type="SMART" id="SM01390">
    <property type="entry name" value="Ribosomal_S4"/>
    <property type="match status" value="1"/>
</dbReference>
<dbReference type="SMART" id="SM00363">
    <property type="entry name" value="S4"/>
    <property type="match status" value="1"/>
</dbReference>
<dbReference type="SUPFAM" id="SSF55174">
    <property type="entry name" value="Alpha-L RNA-binding motif"/>
    <property type="match status" value="1"/>
</dbReference>
<dbReference type="PROSITE" id="PS00632">
    <property type="entry name" value="RIBOSOMAL_S4"/>
    <property type="match status" value="1"/>
</dbReference>
<dbReference type="PROSITE" id="PS50889">
    <property type="entry name" value="S4"/>
    <property type="match status" value="1"/>
</dbReference>
<sequence>MARFRGSNWKKSRRLGISLSGTGKELEKRPYAPGQHGPNQRKKLSEYGLQLREKQKLRYLYGMTERQFRNTFDIAGKKFGVHGENFMILLASRLDAVVYSLGLARTRRQARQLVNHGHILVDGKRVDIPSYSVKPGQTISVREKSQKLNIIVESVEINNFVPEYLNFDADSLTGTFVRLPERSELPAEINEQLIVEYYSR</sequence>
<gene>
    <name evidence="1" type="primary">rpsD</name>
    <name type="ordered locus">NWMN_1613</name>
</gene>
<comment type="function">
    <text evidence="1">One of the primary rRNA binding proteins, it binds directly to 16S rRNA where it nucleates assembly of the body of the 30S subunit.</text>
</comment>
<comment type="function">
    <text evidence="1">With S5 and S12 plays an important role in translational accuracy.</text>
</comment>
<comment type="subunit">
    <text evidence="1">Part of the 30S ribosomal subunit. Contacts protein S5. The interaction surface between S4 and S5 is involved in control of translational fidelity.</text>
</comment>
<comment type="similarity">
    <text evidence="1">Belongs to the universal ribosomal protein uS4 family.</text>
</comment>
<organism>
    <name type="scientific">Staphylococcus aureus (strain Newman)</name>
    <dbReference type="NCBI Taxonomy" id="426430"/>
    <lineage>
        <taxon>Bacteria</taxon>
        <taxon>Bacillati</taxon>
        <taxon>Bacillota</taxon>
        <taxon>Bacilli</taxon>
        <taxon>Bacillales</taxon>
        <taxon>Staphylococcaceae</taxon>
        <taxon>Staphylococcus</taxon>
    </lineage>
</organism>
<evidence type="ECO:0000255" key="1">
    <source>
        <dbReference type="HAMAP-Rule" id="MF_01306"/>
    </source>
</evidence>
<evidence type="ECO:0000305" key="2"/>
<proteinExistence type="inferred from homology"/>
<feature type="chain" id="PRO_0000322338" description="Small ribosomal subunit protein uS4">
    <location>
        <begin position="1"/>
        <end position="200"/>
    </location>
</feature>
<feature type="domain" description="S4 RNA-binding" evidence="1">
    <location>
        <begin position="92"/>
        <end position="155"/>
    </location>
</feature>